<sequence>MARFSPQDLADHLKDGLLSFPATAFQDDLEVDEAAYVEHIEWQSSYPVAGLFAAGGTGEGFSLTVEENHRVTQLAVQASSPEVPVLGSATGSTKSAIANAQGAEAAGAEGVLLLPPYLTECDAEGLYNHAAAVCESTSLGVIVYNRANAIYSPEVIARLSERYPNFIGFKDGTGNIEHLAKITTLCGDRLFYLGGLPTAETFALPLLQMGMSTYSSAMFNFIPDFALSFYADVRAQDSAAVKQKLSDFVLPYLDIRDRAQGYGVSIVKGGLKAVGRNAGGVRPPLRNLSEQDIADLSDLLATSGAGSYRLPVEVKA</sequence>
<reference key="1">
    <citation type="journal article" date="2003" name="Appl. Microbiol. Biotechnol.">
        <title>The Corynebacterium glutamicum genome: features and impacts on biotechnological processes.</title>
        <authorList>
            <person name="Ikeda M."/>
            <person name="Nakagawa S."/>
        </authorList>
    </citation>
    <scope>NUCLEOTIDE SEQUENCE [LARGE SCALE GENOMIC DNA]</scope>
    <source>
        <strain>ATCC 13032 / DSM 20300 / JCM 1318 / BCRC 11384 / CCUG 27702 / LMG 3730 / NBRC 12168 / NCIMB 10025 / NRRL B-2784 / 534</strain>
    </source>
</reference>
<reference key="2">
    <citation type="journal article" date="2003" name="J. Biotechnol.">
        <title>The complete Corynebacterium glutamicum ATCC 13032 genome sequence and its impact on the production of L-aspartate-derived amino acids and vitamins.</title>
        <authorList>
            <person name="Kalinowski J."/>
            <person name="Bathe B."/>
            <person name="Bartels D."/>
            <person name="Bischoff N."/>
            <person name="Bott M."/>
            <person name="Burkovski A."/>
            <person name="Dusch N."/>
            <person name="Eggeling L."/>
            <person name="Eikmanns B.J."/>
            <person name="Gaigalat L."/>
            <person name="Goesmann A."/>
            <person name="Hartmann M."/>
            <person name="Huthmacher K."/>
            <person name="Kraemer R."/>
            <person name="Linke B."/>
            <person name="McHardy A.C."/>
            <person name="Meyer F."/>
            <person name="Moeckel B."/>
            <person name="Pfefferle W."/>
            <person name="Puehler A."/>
            <person name="Rey D.A."/>
            <person name="Rueckert C."/>
            <person name="Rupp O."/>
            <person name="Sahm H."/>
            <person name="Wendisch V.F."/>
            <person name="Wiegraebe I."/>
            <person name="Tauch A."/>
        </authorList>
    </citation>
    <scope>NUCLEOTIDE SEQUENCE [LARGE SCALE GENOMIC DNA]</scope>
    <source>
        <strain>ATCC 13032 / DSM 20300 / JCM 1318 / BCRC 11384 / CCUG 27702 / LMG 3730 / NBRC 12168 / NCIMB 10025 / NRRL B-2784 / 534</strain>
    </source>
</reference>
<feature type="chain" id="PRO_0000103232" description="Probable 5-dehydro-4-deoxyglucarate dehydratase">
    <location>
        <begin position="1"/>
        <end position="316"/>
    </location>
</feature>
<dbReference type="EC" id="4.2.1.41" evidence="1"/>
<dbReference type="EMBL" id="BA000036">
    <property type="protein sequence ID" value="BAB97846.1"/>
    <property type="molecule type" value="Genomic_DNA"/>
</dbReference>
<dbReference type="EMBL" id="BX927149">
    <property type="protein sequence ID" value="CAF19169.1"/>
    <property type="molecule type" value="Genomic_DNA"/>
</dbReference>
<dbReference type="RefSeq" id="NP_599700.1">
    <property type="nucleotide sequence ID" value="NC_003450.3"/>
</dbReference>
<dbReference type="RefSeq" id="WP_003860476.1">
    <property type="nucleotide sequence ID" value="NC_006958.1"/>
</dbReference>
<dbReference type="SMR" id="Q8NT57"/>
<dbReference type="STRING" id="196627.cg0536"/>
<dbReference type="KEGG" id="cgb:cg0536"/>
<dbReference type="KEGG" id="cgl:Cgl0453"/>
<dbReference type="PATRIC" id="fig|196627.13.peg.452"/>
<dbReference type="eggNOG" id="COG0329">
    <property type="taxonomic scope" value="Bacteria"/>
</dbReference>
<dbReference type="HOGENOM" id="CLU_049343_5_2_11"/>
<dbReference type="OrthoDB" id="8995637at2"/>
<dbReference type="BioCyc" id="CORYNE:G18NG-10010-MONOMER"/>
<dbReference type="UniPathway" id="UPA00564">
    <property type="reaction ID" value="UER00628"/>
</dbReference>
<dbReference type="Proteomes" id="UP000000582">
    <property type="component" value="Chromosome"/>
</dbReference>
<dbReference type="Proteomes" id="UP000001009">
    <property type="component" value="Chromosome"/>
</dbReference>
<dbReference type="GO" id="GO:0008840">
    <property type="term" value="F:4-hydroxy-tetrahydrodipicolinate synthase activity"/>
    <property type="evidence" value="ECO:0007669"/>
    <property type="project" value="TreeGrafter"/>
</dbReference>
<dbReference type="GO" id="GO:0047448">
    <property type="term" value="F:5-dehydro-4-deoxyglucarate dehydratase activity"/>
    <property type="evidence" value="ECO:0007669"/>
    <property type="project" value="UniProtKB-UniRule"/>
</dbReference>
<dbReference type="GO" id="GO:0042838">
    <property type="term" value="P:D-glucarate catabolic process"/>
    <property type="evidence" value="ECO:0007669"/>
    <property type="project" value="UniProtKB-UniRule"/>
</dbReference>
<dbReference type="CDD" id="cd00951">
    <property type="entry name" value="KDGDH"/>
    <property type="match status" value="1"/>
</dbReference>
<dbReference type="Gene3D" id="3.20.20.70">
    <property type="entry name" value="Aldolase class I"/>
    <property type="match status" value="1"/>
</dbReference>
<dbReference type="HAMAP" id="MF_00694">
    <property type="entry name" value="KDGDH"/>
    <property type="match status" value="1"/>
</dbReference>
<dbReference type="InterPro" id="IPR013785">
    <property type="entry name" value="Aldolase_TIM"/>
</dbReference>
<dbReference type="InterPro" id="IPR002220">
    <property type="entry name" value="DapA-like"/>
</dbReference>
<dbReference type="InterPro" id="IPR017655">
    <property type="entry name" value="Dehydro-deoxyglucarate_dehyd"/>
</dbReference>
<dbReference type="NCBIfam" id="NF002958">
    <property type="entry name" value="PRK03620.1"/>
    <property type="match status" value="1"/>
</dbReference>
<dbReference type="PANTHER" id="PTHR12128:SF19">
    <property type="entry name" value="5-DEHYDRO-4-DEOXYGLUCARATE DEHYDRATASE 2-RELATED"/>
    <property type="match status" value="1"/>
</dbReference>
<dbReference type="PANTHER" id="PTHR12128">
    <property type="entry name" value="DIHYDRODIPICOLINATE SYNTHASE"/>
    <property type="match status" value="1"/>
</dbReference>
<dbReference type="Pfam" id="PF00701">
    <property type="entry name" value="DHDPS"/>
    <property type="match status" value="1"/>
</dbReference>
<dbReference type="PIRSF" id="PIRSF001365">
    <property type="entry name" value="DHDPS"/>
    <property type="match status" value="1"/>
</dbReference>
<dbReference type="SMART" id="SM01130">
    <property type="entry name" value="DHDPS"/>
    <property type="match status" value="1"/>
</dbReference>
<dbReference type="SUPFAM" id="SSF51569">
    <property type="entry name" value="Aldolase"/>
    <property type="match status" value="1"/>
</dbReference>
<evidence type="ECO:0000255" key="1">
    <source>
        <dbReference type="HAMAP-Rule" id="MF_00694"/>
    </source>
</evidence>
<keyword id="KW-0456">Lyase</keyword>
<keyword id="KW-1185">Reference proteome</keyword>
<organism>
    <name type="scientific">Corynebacterium glutamicum (strain ATCC 13032 / DSM 20300 / JCM 1318 / BCRC 11384 / CCUG 27702 / LMG 3730 / NBRC 12168 / NCIMB 10025 / NRRL B-2784 / 534)</name>
    <dbReference type="NCBI Taxonomy" id="196627"/>
    <lineage>
        <taxon>Bacteria</taxon>
        <taxon>Bacillati</taxon>
        <taxon>Actinomycetota</taxon>
        <taxon>Actinomycetes</taxon>
        <taxon>Mycobacteriales</taxon>
        <taxon>Corynebacteriaceae</taxon>
        <taxon>Corynebacterium</taxon>
    </lineage>
</organism>
<protein>
    <recommendedName>
        <fullName evidence="1">Probable 5-dehydro-4-deoxyglucarate dehydratase</fullName>
        <ecNumber evidence="1">4.2.1.41</ecNumber>
    </recommendedName>
    <alternativeName>
        <fullName evidence="1">5-keto-4-deoxy-glucarate dehydratase</fullName>
        <shortName evidence="1">KDGDH</shortName>
    </alternativeName>
</protein>
<gene>
    <name type="ordered locus">Cgl0453</name>
    <name type="ordered locus">cg0536</name>
</gene>
<accession>Q8NT57</accession>
<name>KDGD_CORGL</name>
<comment type="catalytic activity">
    <reaction evidence="1">
        <text>5-dehydro-4-deoxy-D-glucarate + H(+) = 2,5-dioxopentanoate + CO2 + H2O</text>
        <dbReference type="Rhea" id="RHEA:24608"/>
        <dbReference type="ChEBI" id="CHEBI:15377"/>
        <dbReference type="ChEBI" id="CHEBI:15378"/>
        <dbReference type="ChEBI" id="CHEBI:16526"/>
        <dbReference type="ChEBI" id="CHEBI:42819"/>
        <dbReference type="ChEBI" id="CHEBI:58136"/>
        <dbReference type="EC" id="4.2.1.41"/>
    </reaction>
</comment>
<comment type="pathway">
    <text evidence="1">Carbohydrate acid metabolism; D-glucarate degradation; 2,5-dioxopentanoate from D-glucarate: step 2/2.</text>
</comment>
<comment type="similarity">
    <text evidence="1">Belongs to the DapA family.</text>
</comment>
<proteinExistence type="inferred from homology"/>